<sequence length="857" mass="95609">MTRRRVLSVVVLLAALACRLGAQTPEQPAPPATTVQPTATRQQTSFPFRVCELSSHGDLFRFSSDIQCPSFGTRENHTEGLLMVFKDNIIPYSFKVRSYTKIVTNILIYNGWYADSVTNRHEEKFSVDSYETDQMDTIYQCYNAVKMTKDGLTRVYVDRDGVNITVNLKPTGGLANGVRRYASQTELYDAPGWLIWTYRTRTTVNCLITDMMAKSNSPFDFFVTTTGQTVEMSPFYDGKNKETFHERADSFHVRTNYKIVDYDNRGTNPQGERRAFLDKGTYTLSWKLENRTAYCPLQHWQTFDSTIATETGKSIHFVTDEGTSSFVTNTTVGIELPDAFKCIEEQVNKTMHEKYEAVQDRYTKGQEAITYFITSGGLLLAWLPLTPRSLATVKNLTELTTPTSSPPSSPSPPAPPAARGSTSAAVLRRRRRDAGNATTPVPPAAPGKSLGTLNNPATVQIQFAYDSLRRQINRMLGDLARAWCLEQKRQNMVLRELTKINPTTVMSSIYGKAVAAKRLGDVISVSQCVPVNQATVTLRKSMRVPGSETMCYSRPLVSFSFINDTKTYEGQLGTDNEIFLTKKMTEVCQATSQYYFQSGNEIHVYNDYHHFKTIELDGIATLQTFISLNTSLIENIDFASLELYSRDEQRASNVFDLEGIFREYNFQAQNIAGLRKDLDNAVSNGRNQFVDGLGELMDSLGSVGQSITNLVSTVGGLFSSLVSGFISFFKNPFGGMLILVLVAGVVILVISLTRRTRQMSQQPVQMLYPGIDELAQQHASGEGPGINPISKTELQAIMLALHEQNQEQKRAAQRAAGPSVASRALQAARDRFPGLRRRRYHDPETAAALLGEAETEF</sequence>
<accession>P0C762</accession>
<accession>Q3KSP0</accession>
<reference key="1">
    <citation type="journal article" date="2005" name="J. Virol.">
        <title>Genomic sequence analysis of Epstein-Barr virus strain GD1 from a nasopharyngeal carcinoma patient.</title>
        <authorList>
            <person name="Zeng M.-S."/>
            <person name="Li D.-J."/>
            <person name="Liu Q.-L."/>
            <person name="Song L.-B."/>
            <person name="Li M.-Z."/>
            <person name="Zhang R.-H."/>
            <person name="Yu X.-J."/>
            <person name="Wang H.-M."/>
            <person name="Ernberg I."/>
            <person name="Zeng Y.-X."/>
        </authorList>
    </citation>
    <scope>NUCLEOTIDE SEQUENCE [LARGE SCALE GENOMIC DNA]</scope>
</reference>
<protein>
    <recommendedName>
        <fullName evidence="3">Envelope glycoprotein B</fullName>
        <shortName evidence="3">gB</shortName>
    </recommendedName>
</protein>
<keyword id="KW-0002">3D-structure</keyword>
<keyword id="KW-1015">Disulfide bond</keyword>
<keyword id="KW-0325">Glycoprotein</keyword>
<keyword id="KW-1032">Host cell membrane</keyword>
<keyword id="KW-1039">Host endosome</keyword>
<keyword id="KW-1040">Host Golgi apparatus</keyword>
<keyword id="KW-1043">Host membrane</keyword>
<keyword id="KW-0945">Host-virus interaction</keyword>
<keyword id="KW-0472">Membrane</keyword>
<keyword id="KW-0732">Signal</keyword>
<keyword id="KW-0812">Transmembrane</keyword>
<keyword id="KW-1133">Transmembrane helix</keyword>
<keyword id="KW-1161">Viral attachment to host cell</keyword>
<keyword id="KW-0261">Viral envelope protein</keyword>
<keyword id="KW-0946">Virion</keyword>
<keyword id="KW-1160">Virus entry into host cell</keyword>
<organism>
    <name type="scientific">Epstein-Barr virus (strain GD1)</name>
    <name type="common">HHV-4</name>
    <name type="synonym">Human gammaherpesvirus 4</name>
    <dbReference type="NCBI Taxonomy" id="10376"/>
    <lineage>
        <taxon>Viruses</taxon>
        <taxon>Duplodnaviria</taxon>
        <taxon>Heunggongvirae</taxon>
        <taxon>Peploviricota</taxon>
        <taxon>Herviviricetes</taxon>
        <taxon>Herpesvirales</taxon>
        <taxon>Orthoherpesviridae</taxon>
        <taxon>Gammaherpesvirinae</taxon>
        <taxon>Lymphocryptovirus</taxon>
        <taxon>Lymphocryptovirus humangamma4</taxon>
    </lineage>
</organism>
<dbReference type="EMBL" id="AY961628">
    <property type="protein sequence ID" value="AAY41155.1"/>
    <property type="molecule type" value="Genomic_DNA"/>
</dbReference>
<dbReference type="PDB" id="7FBI">
    <property type="method" value="EM"/>
    <property type="resolution" value="3.90 A"/>
    <property type="chains" value="A=22-674"/>
</dbReference>
<dbReference type="PDBsum" id="7FBI"/>
<dbReference type="EMDB" id="EMD-31516"/>
<dbReference type="EMDB" id="EMD-31517"/>
<dbReference type="SMR" id="P0C762"/>
<dbReference type="IntAct" id="P0C762">
    <property type="interactions" value="15"/>
</dbReference>
<dbReference type="GlyCosmos" id="P0C762">
    <property type="glycosylation" value="9 sites, No reported glycans"/>
</dbReference>
<dbReference type="Proteomes" id="UP000007641">
    <property type="component" value="Genome"/>
</dbReference>
<dbReference type="GO" id="GO:0044175">
    <property type="term" value="C:host cell endosome membrane"/>
    <property type="evidence" value="ECO:0007669"/>
    <property type="project" value="UniProtKB-SubCell"/>
</dbReference>
<dbReference type="GO" id="GO:0044178">
    <property type="term" value="C:host cell Golgi membrane"/>
    <property type="evidence" value="ECO:0007669"/>
    <property type="project" value="UniProtKB-SubCell"/>
</dbReference>
<dbReference type="GO" id="GO:0020002">
    <property type="term" value="C:host cell plasma membrane"/>
    <property type="evidence" value="ECO:0007669"/>
    <property type="project" value="UniProtKB-SubCell"/>
</dbReference>
<dbReference type="GO" id="GO:0016020">
    <property type="term" value="C:membrane"/>
    <property type="evidence" value="ECO:0007669"/>
    <property type="project" value="UniProtKB-KW"/>
</dbReference>
<dbReference type="GO" id="GO:0019031">
    <property type="term" value="C:viral envelope"/>
    <property type="evidence" value="ECO:0007669"/>
    <property type="project" value="UniProtKB-KW"/>
</dbReference>
<dbReference type="GO" id="GO:0055036">
    <property type="term" value="C:virion membrane"/>
    <property type="evidence" value="ECO:0007669"/>
    <property type="project" value="UniProtKB-SubCell"/>
</dbReference>
<dbReference type="GO" id="GO:0046718">
    <property type="term" value="P:symbiont entry into host cell"/>
    <property type="evidence" value="ECO:0007669"/>
    <property type="project" value="UniProtKB-KW"/>
</dbReference>
<dbReference type="GO" id="GO:0019062">
    <property type="term" value="P:virion attachment to host cell"/>
    <property type="evidence" value="ECO:0007669"/>
    <property type="project" value="UniProtKB-KW"/>
</dbReference>
<dbReference type="Gene3D" id="1.20.5.1890">
    <property type="match status" value="1"/>
</dbReference>
<dbReference type="Gene3D" id="2.30.29.100">
    <property type="match status" value="2"/>
</dbReference>
<dbReference type="Gene3D" id="2.30.30.1230">
    <property type="match status" value="1"/>
</dbReference>
<dbReference type="Gene3D" id="6.10.250.3280">
    <property type="match status" value="1"/>
</dbReference>
<dbReference type="HAMAP" id="MF_04032">
    <property type="entry name" value="HSV_GB"/>
    <property type="match status" value="1"/>
</dbReference>
<dbReference type="InterPro" id="IPR035377">
    <property type="entry name" value="Glycoprot_B_PH1"/>
</dbReference>
<dbReference type="InterPro" id="IPR035381">
    <property type="entry name" value="Glycoprot_B_PH2"/>
</dbReference>
<dbReference type="InterPro" id="IPR038631">
    <property type="entry name" value="Glycoprot_B_PH2_sf"/>
</dbReference>
<dbReference type="InterPro" id="IPR055341">
    <property type="entry name" value="Glycoprotein_B_ecto_C"/>
</dbReference>
<dbReference type="InterPro" id="IPR000234">
    <property type="entry name" value="Herpes_Glycoprot_B"/>
</dbReference>
<dbReference type="Pfam" id="PF17416">
    <property type="entry name" value="Glycoprot_B_PH1"/>
    <property type="match status" value="1"/>
</dbReference>
<dbReference type="Pfam" id="PF17417">
    <property type="entry name" value="Glycoprot_B_PH2"/>
    <property type="match status" value="1"/>
</dbReference>
<dbReference type="Pfam" id="PF00606">
    <property type="entry name" value="Glycoprotein_B"/>
    <property type="match status" value="1"/>
</dbReference>
<dbReference type="SUPFAM" id="SSF161008">
    <property type="entry name" value="Viral glycoprotein ectodomain-like"/>
    <property type="match status" value="1"/>
</dbReference>
<organismHost>
    <name type="scientific">Homo sapiens</name>
    <name type="common">Human</name>
    <dbReference type="NCBI Taxonomy" id="9606"/>
</organismHost>
<name>GB_EBVG</name>
<feature type="signal peptide" evidence="3">
    <location>
        <begin position="1"/>
        <end position="21"/>
    </location>
</feature>
<feature type="chain" id="PRO_0000385468" description="Envelope glycoprotein B" evidence="3">
    <location>
        <begin position="22"/>
        <end position="857"/>
    </location>
</feature>
<feature type="topological domain" description="Virion surface" evidence="3">
    <location>
        <begin position="22"/>
        <end position="732"/>
    </location>
</feature>
<feature type="transmembrane region" description="Helical" evidence="3">
    <location>
        <begin position="733"/>
        <end position="753"/>
    </location>
</feature>
<feature type="topological domain" description="Intravirion" evidence="3">
    <location>
        <begin position="754"/>
        <end position="857"/>
    </location>
</feature>
<feature type="region of interest" description="Involved in fusion and/or binding to host membrane" evidence="3">
    <location>
        <begin position="108"/>
        <end position="114"/>
    </location>
</feature>
<feature type="region of interest" description="Involved in fusion and/or binding to host membrane" evidence="3">
    <location>
        <begin position="192"/>
        <end position="200"/>
    </location>
</feature>
<feature type="region of interest" description="Disordered" evidence="4">
    <location>
        <begin position="398"/>
        <end position="452"/>
    </location>
</feature>
<feature type="region of interest" description="Hydrophobic membrane proximal region" evidence="3">
    <location>
        <begin position="678"/>
        <end position="730"/>
    </location>
</feature>
<feature type="region of interest" description="Hydrophobic membrane proximal region">
    <location>
        <begin position="709"/>
        <end position="729"/>
    </location>
</feature>
<feature type="region of interest" description="Disordered" evidence="4">
    <location>
        <begin position="832"/>
        <end position="857"/>
    </location>
</feature>
<feature type="compositionally biased region" description="Pro residues" evidence="4">
    <location>
        <begin position="404"/>
        <end position="416"/>
    </location>
</feature>
<feature type="compositionally biased region" description="Low complexity" evidence="4">
    <location>
        <begin position="845"/>
        <end position="857"/>
    </location>
</feature>
<feature type="site" description="Cleavage; by host furin" evidence="2">
    <location>
        <begin position="432"/>
        <end position="433"/>
    </location>
</feature>
<feature type="glycosylation site" description="N-linked (GlcNAc...) asparagine; by host" evidence="3">
    <location>
        <position position="76"/>
    </location>
</feature>
<feature type="glycosylation site" description="N-linked (GlcNAc...) asparagine; by host" evidence="3">
    <location>
        <position position="163"/>
    </location>
</feature>
<feature type="glycosylation site" description="N-linked (GlcNAc...) asparagine; by host" evidence="3">
    <location>
        <position position="290"/>
    </location>
</feature>
<feature type="glycosylation site" description="N-linked (GlcNAc...) asparagine; by host" evidence="3">
    <location>
        <position position="329"/>
    </location>
</feature>
<feature type="glycosylation site" description="N-linked (GlcNAc...) asparagine; by host" evidence="3">
    <location>
        <position position="348"/>
    </location>
</feature>
<feature type="glycosylation site" description="N-linked (GlcNAc...) asparagine; by host" evidence="3">
    <location>
        <position position="395"/>
    </location>
</feature>
<feature type="glycosylation site" description="N-linked (GlcNAc...) asparagine; by host" evidence="3">
    <location>
        <position position="436"/>
    </location>
</feature>
<feature type="glycosylation site" description="N-linked (GlcNAc...) asparagine; by host" evidence="3">
    <location>
        <position position="563"/>
    </location>
</feature>
<feature type="glycosylation site" description="N-linked (GlcNAc...) asparagine; by host" evidence="3">
    <location>
        <position position="629"/>
    </location>
</feature>
<feature type="disulfide bond" evidence="3">
    <location>
        <begin position="51"/>
        <end position="528"/>
    </location>
</feature>
<feature type="disulfide bond" evidence="3">
    <location>
        <begin position="68"/>
        <end position="484"/>
    </location>
</feature>
<feature type="disulfide bond" evidence="3">
    <location>
        <begin position="141"/>
        <end position="206"/>
    </location>
</feature>
<feature type="disulfide bond" evidence="3">
    <location>
        <begin position="295"/>
        <end position="342"/>
    </location>
</feature>
<feature type="disulfide bond" evidence="3">
    <location>
        <begin position="551"/>
        <end position="588"/>
    </location>
</feature>
<proteinExistence type="evidence at protein level"/>
<evidence type="ECO:0000250" key="1"/>
<evidence type="ECO:0000255" key="2"/>
<evidence type="ECO:0000255" key="3">
    <source>
        <dbReference type="HAMAP-Rule" id="MF_04032"/>
    </source>
</evidence>
<evidence type="ECO:0000256" key="4">
    <source>
        <dbReference type="SAM" id="MobiDB-lite"/>
    </source>
</evidence>
<comment type="function">
    <text evidence="3">Envelope glycoprotein that forms spikes at the surface of virion envelope. Essential for the initial attachment to heparan sulfate moieties of the host cell surface proteoglycans. Involved in fusion of viral and cellular membranes leading to virus entry into the host cell. Following initial binding to its host receptors, membrane fusion is mediated by the fusion machinery composed at least of gB and the heterodimer gH/gL. May be involved in the fusion between the virion envelope and the outer nuclear membrane during virion egress.</text>
</comment>
<comment type="subunit">
    <text evidence="3">Homotrimer; disulfide-linked. Binds to heparan sulfate proteoglycans. Interacts with gH/gL heterodimer.</text>
</comment>
<comment type="subcellular location">
    <subcellularLocation>
        <location evidence="3">Virion membrane</location>
        <topology evidence="3">Single-pass type I membrane protein</topology>
    </subcellularLocation>
    <subcellularLocation>
        <location evidence="3">Host cell membrane</location>
        <topology evidence="3">Single-pass type I membrane protein</topology>
    </subcellularLocation>
    <subcellularLocation>
        <location evidence="3">Host endosome membrane</location>
        <topology evidence="3">Single-pass type I membrane protein</topology>
    </subcellularLocation>
    <subcellularLocation>
        <location evidence="3">Host Golgi apparatus membrane</location>
        <topology evidence="3">Single-pass type I membrane protein</topology>
    </subcellularLocation>
    <text evidence="3">During virion morphogenesis, this protein probably accumulates in the endosomes and trans-Golgi where secondary envelopment occurs. It is probably transported to the cell surface from where it is endocytosed and directed to the trans-Golgi network (TGN).</text>
</comment>
<comment type="PTM">
    <text evidence="1">A proteolytic cleavage by host furin generates two subunits that remain linked by disulfide bonds.</text>
</comment>
<comment type="similarity">
    <text evidence="3">Belongs to the herpesviridae glycoprotein B family.</text>
</comment>
<gene>
    <name evidence="3" type="primary">gB</name>
    <name type="ORF">BALF4</name>
</gene>